<reference key="1">
    <citation type="journal article" date="2002" name="Nature">
        <title>The genome sequence of Schizosaccharomyces pombe.</title>
        <authorList>
            <person name="Wood V."/>
            <person name="Gwilliam R."/>
            <person name="Rajandream M.A."/>
            <person name="Lyne M.H."/>
            <person name="Lyne R."/>
            <person name="Stewart A."/>
            <person name="Sgouros J.G."/>
            <person name="Peat N."/>
            <person name="Hayles J."/>
            <person name="Baker S.G."/>
            <person name="Basham D."/>
            <person name="Bowman S."/>
            <person name="Brooks K."/>
            <person name="Brown D."/>
            <person name="Brown S."/>
            <person name="Chillingworth T."/>
            <person name="Churcher C.M."/>
            <person name="Collins M."/>
            <person name="Connor R."/>
            <person name="Cronin A."/>
            <person name="Davis P."/>
            <person name="Feltwell T."/>
            <person name="Fraser A."/>
            <person name="Gentles S."/>
            <person name="Goble A."/>
            <person name="Hamlin N."/>
            <person name="Harris D.E."/>
            <person name="Hidalgo J."/>
            <person name="Hodgson G."/>
            <person name="Holroyd S."/>
            <person name="Hornsby T."/>
            <person name="Howarth S."/>
            <person name="Huckle E.J."/>
            <person name="Hunt S."/>
            <person name="Jagels K."/>
            <person name="James K.D."/>
            <person name="Jones L."/>
            <person name="Jones M."/>
            <person name="Leather S."/>
            <person name="McDonald S."/>
            <person name="McLean J."/>
            <person name="Mooney P."/>
            <person name="Moule S."/>
            <person name="Mungall K.L."/>
            <person name="Murphy L.D."/>
            <person name="Niblett D."/>
            <person name="Odell C."/>
            <person name="Oliver K."/>
            <person name="O'Neil S."/>
            <person name="Pearson D."/>
            <person name="Quail M.A."/>
            <person name="Rabbinowitsch E."/>
            <person name="Rutherford K.M."/>
            <person name="Rutter S."/>
            <person name="Saunders D."/>
            <person name="Seeger K."/>
            <person name="Sharp S."/>
            <person name="Skelton J."/>
            <person name="Simmonds M.N."/>
            <person name="Squares R."/>
            <person name="Squares S."/>
            <person name="Stevens K."/>
            <person name="Taylor K."/>
            <person name="Taylor R.G."/>
            <person name="Tivey A."/>
            <person name="Walsh S.V."/>
            <person name="Warren T."/>
            <person name="Whitehead S."/>
            <person name="Woodward J.R."/>
            <person name="Volckaert G."/>
            <person name="Aert R."/>
            <person name="Robben J."/>
            <person name="Grymonprez B."/>
            <person name="Weltjens I."/>
            <person name="Vanstreels E."/>
            <person name="Rieger M."/>
            <person name="Schaefer M."/>
            <person name="Mueller-Auer S."/>
            <person name="Gabel C."/>
            <person name="Fuchs M."/>
            <person name="Duesterhoeft A."/>
            <person name="Fritzc C."/>
            <person name="Holzer E."/>
            <person name="Moestl D."/>
            <person name="Hilbert H."/>
            <person name="Borzym K."/>
            <person name="Langer I."/>
            <person name="Beck A."/>
            <person name="Lehrach H."/>
            <person name="Reinhardt R."/>
            <person name="Pohl T.M."/>
            <person name="Eger P."/>
            <person name="Zimmermann W."/>
            <person name="Wedler H."/>
            <person name="Wambutt R."/>
            <person name="Purnelle B."/>
            <person name="Goffeau A."/>
            <person name="Cadieu E."/>
            <person name="Dreano S."/>
            <person name="Gloux S."/>
            <person name="Lelaure V."/>
            <person name="Mottier S."/>
            <person name="Galibert F."/>
            <person name="Aves S.J."/>
            <person name="Xiang Z."/>
            <person name="Hunt C."/>
            <person name="Moore K."/>
            <person name="Hurst S.M."/>
            <person name="Lucas M."/>
            <person name="Rochet M."/>
            <person name="Gaillardin C."/>
            <person name="Tallada V.A."/>
            <person name="Garzon A."/>
            <person name="Thode G."/>
            <person name="Daga R.R."/>
            <person name="Cruzado L."/>
            <person name="Jimenez J."/>
            <person name="Sanchez M."/>
            <person name="del Rey F."/>
            <person name="Benito J."/>
            <person name="Dominguez A."/>
            <person name="Revuelta J.L."/>
            <person name="Moreno S."/>
            <person name="Armstrong J."/>
            <person name="Forsburg S.L."/>
            <person name="Cerutti L."/>
            <person name="Lowe T."/>
            <person name="McCombie W.R."/>
            <person name="Paulsen I."/>
            <person name="Potashkin J."/>
            <person name="Shpakovski G.V."/>
            <person name="Ussery D."/>
            <person name="Barrell B.G."/>
            <person name="Nurse P."/>
        </authorList>
    </citation>
    <scope>NUCLEOTIDE SEQUENCE [LARGE SCALE GENOMIC DNA]</scope>
    <source>
        <strain>972 / ATCC 24843</strain>
    </source>
</reference>
<keyword id="KW-0342">GTP-binding</keyword>
<keyword id="KW-0396">Initiation factor</keyword>
<keyword id="KW-0547">Nucleotide-binding</keyword>
<keyword id="KW-0648">Protein biosynthesis</keyword>
<keyword id="KW-1185">Reference proteome</keyword>
<name>IF5_SCHPO</name>
<proteinExistence type="inferred from homology"/>
<comment type="function">
    <text evidence="1">Catalyzes the hydrolysis of GTP bound to the 40S ribosomal initiation complex (40S.mRNA.Met-tRNA[F].eIF-2.GTP) with the subsequent joining of a 60S ribosomal subunit resulting in the release of eIF-2 and the guanine nucleotide. The subsequent joining of a 60S ribosomal subunit results in the formation of a functional 80S initiation complex (80S.mRNA.Met-tRNA[F]) (By similarity).</text>
</comment>
<comment type="subunit">
    <text evidence="1">Monomer.</text>
</comment>
<comment type="similarity">
    <text evidence="5">Belongs to the eIF-2-beta/eIF-5 family.</text>
</comment>
<protein>
    <recommendedName>
        <fullName>Probable eukaryotic translation initiation factor 5</fullName>
        <shortName>eIF-5</shortName>
    </recommendedName>
</protein>
<gene>
    <name type="primary">tif5</name>
    <name type="ORF">SPAC2F7.05c</name>
</gene>
<accession>Q09689</accession>
<evidence type="ECO:0000250" key="1"/>
<evidence type="ECO:0000255" key="2"/>
<evidence type="ECO:0000255" key="3">
    <source>
        <dbReference type="PROSITE-ProRule" id="PRU00695"/>
    </source>
</evidence>
<evidence type="ECO:0000256" key="4">
    <source>
        <dbReference type="SAM" id="MobiDB-lite"/>
    </source>
</evidence>
<evidence type="ECO:0000305" key="5"/>
<organism>
    <name type="scientific">Schizosaccharomyces pombe (strain 972 / ATCC 24843)</name>
    <name type="common">Fission yeast</name>
    <dbReference type="NCBI Taxonomy" id="284812"/>
    <lineage>
        <taxon>Eukaryota</taxon>
        <taxon>Fungi</taxon>
        <taxon>Dikarya</taxon>
        <taxon>Ascomycota</taxon>
        <taxon>Taphrinomycotina</taxon>
        <taxon>Schizosaccharomycetes</taxon>
        <taxon>Schizosaccharomycetales</taxon>
        <taxon>Schizosaccharomycetaceae</taxon>
        <taxon>Schizosaccharomyces</taxon>
    </lineage>
</organism>
<dbReference type="EMBL" id="CU329670">
    <property type="protein sequence ID" value="CAA90492.1"/>
    <property type="molecule type" value="Genomic_DNA"/>
</dbReference>
<dbReference type="PIR" id="T38553">
    <property type="entry name" value="S58149"/>
</dbReference>
<dbReference type="RefSeq" id="NP_592976.1">
    <property type="nucleotide sequence ID" value="NM_001018376.2"/>
</dbReference>
<dbReference type="SMR" id="Q09689"/>
<dbReference type="BioGRID" id="278125">
    <property type="interactions" value="3"/>
</dbReference>
<dbReference type="FunCoup" id="Q09689">
    <property type="interactions" value="982"/>
</dbReference>
<dbReference type="STRING" id="284812.Q09689"/>
<dbReference type="iPTMnet" id="Q09689"/>
<dbReference type="PaxDb" id="4896-SPAC2F7.05c.1"/>
<dbReference type="EnsemblFungi" id="SPAC2F7.05c.1">
    <property type="protein sequence ID" value="SPAC2F7.05c.1:pep"/>
    <property type="gene ID" value="SPAC2F7.05c"/>
</dbReference>
<dbReference type="GeneID" id="2541629"/>
<dbReference type="KEGG" id="spo:2541629"/>
<dbReference type="PomBase" id="SPAC2F7.05c">
    <property type="gene designation" value="tif5"/>
</dbReference>
<dbReference type="VEuPathDB" id="FungiDB:SPAC2F7.05c"/>
<dbReference type="eggNOG" id="KOG2767">
    <property type="taxonomic scope" value="Eukaryota"/>
</dbReference>
<dbReference type="HOGENOM" id="CLU_026663_1_0_1"/>
<dbReference type="InParanoid" id="Q09689"/>
<dbReference type="OMA" id="YRYKMEK"/>
<dbReference type="PhylomeDB" id="Q09689"/>
<dbReference type="Reactome" id="R-SPO-72702">
    <property type="pathway name" value="Ribosomal scanning and start codon recognition"/>
</dbReference>
<dbReference type="Reactome" id="R-SPO-72706">
    <property type="pathway name" value="GTP hydrolysis and joining of the 60S ribosomal subunit"/>
</dbReference>
<dbReference type="PRO" id="PR:Q09689"/>
<dbReference type="Proteomes" id="UP000002485">
    <property type="component" value="Chromosome I"/>
</dbReference>
<dbReference type="GO" id="GO:0005829">
    <property type="term" value="C:cytosol"/>
    <property type="evidence" value="ECO:0007005"/>
    <property type="project" value="PomBase"/>
</dbReference>
<dbReference type="GO" id="GO:0033290">
    <property type="term" value="C:eukaryotic 48S preinitiation complex"/>
    <property type="evidence" value="ECO:0000266"/>
    <property type="project" value="PomBase"/>
</dbReference>
<dbReference type="GO" id="GO:0071074">
    <property type="term" value="F:eukaryotic initiation factor eIF2 binding"/>
    <property type="evidence" value="ECO:0000318"/>
    <property type="project" value="GO_Central"/>
</dbReference>
<dbReference type="GO" id="GO:0005092">
    <property type="term" value="F:GDP-dissociation inhibitor activity"/>
    <property type="evidence" value="ECO:0000318"/>
    <property type="project" value="GO_Central"/>
</dbReference>
<dbReference type="GO" id="GO:0005525">
    <property type="term" value="F:GTP binding"/>
    <property type="evidence" value="ECO:0007669"/>
    <property type="project" value="UniProtKB-KW"/>
</dbReference>
<dbReference type="GO" id="GO:0005096">
    <property type="term" value="F:GTPase activator activity"/>
    <property type="evidence" value="ECO:0000266"/>
    <property type="project" value="PomBase"/>
</dbReference>
<dbReference type="GO" id="GO:0003743">
    <property type="term" value="F:translation initiation factor activity"/>
    <property type="evidence" value="ECO:0000318"/>
    <property type="project" value="GO_Central"/>
</dbReference>
<dbReference type="GO" id="GO:0042256">
    <property type="term" value="P:cytosolic ribosome assembly"/>
    <property type="evidence" value="ECO:0000266"/>
    <property type="project" value="PomBase"/>
</dbReference>
<dbReference type="GO" id="GO:0001732">
    <property type="term" value="P:formation of cytoplasmic translation initiation complex"/>
    <property type="evidence" value="ECO:0000318"/>
    <property type="project" value="GO_Central"/>
</dbReference>
<dbReference type="CDD" id="cd11561">
    <property type="entry name" value="W2_eIF5"/>
    <property type="match status" value="1"/>
</dbReference>
<dbReference type="FunFam" id="1.25.40.180:FF:000031">
    <property type="entry name" value="Eukaryotic translation initiation factor 5"/>
    <property type="match status" value="1"/>
</dbReference>
<dbReference type="FunFam" id="2.20.25.350:FF:000001">
    <property type="entry name" value="Eukaryotic translation initiation factor 5"/>
    <property type="match status" value="1"/>
</dbReference>
<dbReference type="FunFam" id="3.30.30.170:FF:000002">
    <property type="entry name" value="Eukaryotic translation initiation factor 5"/>
    <property type="match status" value="1"/>
</dbReference>
<dbReference type="Gene3D" id="1.25.40.180">
    <property type="match status" value="1"/>
</dbReference>
<dbReference type="Gene3D" id="2.20.25.350">
    <property type="match status" value="1"/>
</dbReference>
<dbReference type="Gene3D" id="3.30.30.170">
    <property type="match status" value="1"/>
</dbReference>
<dbReference type="InterPro" id="IPR016024">
    <property type="entry name" value="ARM-type_fold"/>
</dbReference>
<dbReference type="InterPro" id="IPR045196">
    <property type="entry name" value="IF2/IF5"/>
</dbReference>
<dbReference type="InterPro" id="IPR002735">
    <property type="entry name" value="Transl_init_fac_IF2/IF5_dom"/>
</dbReference>
<dbReference type="InterPro" id="IPR016189">
    <property type="entry name" value="Transl_init_fac_IF2/IF5_N"/>
</dbReference>
<dbReference type="InterPro" id="IPR016190">
    <property type="entry name" value="Transl_init_fac_IF2/IF5_Zn-bd"/>
</dbReference>
<dbReference type="InterPro" id="IPR003307">
    <property type="entry name" value="W2_domain"/>
</dbReference>
<dbReference type="PANTHER" id="PTHR23001">
    <property type="entry name" value="EUKARYOTIC TRANSLATION INITIATION FACTOR"/>
    <property type="match status" value="1"/>
</dbReference>
<dbReference type="PANTHER" id="PTHR23001:SF7">
    <property type="entry name" value="EUKARYOTIC TRANSLATION INITIATION FACTOR 5"/>
    <property type="match status" value="1"/>
</dbReference>
<dbReference type="Pfam" id="PF01873">
    <property type="entry name" value="eIF-5_eIF-2B"/>
    <property type="match status" value="1"/>
</dbReference>
<dbReference type="Pfam" id="PF02020">
    <property type="entry name" value="W2"/>
    <property type="match status" value="1"/>
</dbReference>
<dbReference type="SMART" id="SM00653">
    <property type="entry name" value="eIF2B_5"/>
    <property type="match status" value="1"/>
</dbReference>
<dbReference type="SMART" id="SM00515">
    <property type="entry name" value="eIF5C"/>
    <property type="match status" value="1"/>
</dbReference>
<dbReference type="SUPFAM" id="SSF48371">
    <property type="entry name" value="ARM repeat"/>
    <property type="match status" value="1"/>
</dbReference>
<dbReference type="SUPFAM" id="SSF100966">
    <property type="entry name" value="Translation initiation factor 2 beta, aIF2beta, N-terminal domain"/>
    <property type="match status" value="1"/>
</dbReference>
<dbReference type="SUPFAM" id="SSF75689">
    <property type="entry name" value="Zinc-binding domain of translation initiation factor 2 beta"/>
    <property type="match status" value="1"/>
</dbReference>
<dbReference type="PROSITE" id="PS51363">
    <property type="entry name" value="W2"/>
    <property type="match status" value="1"/>
</dbReference>
<sequence>MATINIRRDVKDSFYRYRMPKLQSKIEGKGNGIKTVIPNMSDIAKALGRPPLYVTKFFGFELGAQTTIIADMDRYIVNGAHDAGKLQDLLDVFIRRFVLCASCQNPETELSINKKDQTISYDCKACGYRGVIDGRHKLTGVIVKNPPAKKKSHKHKRDSPVAEEEDGAEDELTRRIRQEAAELPTAEVVNDEDWAVDTSEEAVRARVQELEGNMKDSLTLSDLRGDEEEAESSRYDQFGEWLEDNYPGVSDVEIYKKMKEENIHHKSKAIVVLVQCIITSPYVGEFEKHGALFKKLCTTDKHERALLGGFERLMENTELVHIDVVPKVLLEIYQNDLVSDDMFEKWGAKASKKYVSRETSKKIHEAAEPFLTWLAEASDESESEDEEEEEEDDDE</sequence>
<feature type="chain" id="PRO_0000212526" description="Probable eukaryotic translation initiation factor 5">
    <location>
        <begin position="1"/>
        <end position="395"/>
    </location>
</feature>
<feature type="domain" description="W2" evidence="3">
    <location>
        <begin position="228"/>
        <end position="384"/>
    </location>
</feature>
<feature type="region of interest" description="Disordered" evidence="4">
    <location>
        <begin position="146"/>
        <end position="171"/>
    </location>
</feature>
<feature type="region of interest" description="Disordered" evidence="4">
    <location>
        <begin position="374"/>
        <end position="395"/>
    </location>
</feature>
<feature type="compositionally biased region" description="Basic residues" evidence="4">
    <location>
        <begin position="147"/>
        <end position="157"/>
    </location>
</feature>
<feature type="compositionally biased region" description="Acidic residues" evidence="4">
    <location>
        <begin position="161"/>
        <end position="170"/>
    </location>
</feature>
<feature type="compositionally biased region" description="Acidic residues" evidence="4">
    <location>
        <begin position="377"/>
        <end position="395"/>
    </location>
</feature>
<feature type="binding site" evidence="2">
    <location>
        <begin position="28"/>
        <end position="35"/>
    </location>
    <ligand>
        <name>GTP</name>
        <dbReference type="ChEBI" id="CHEBI:37565"/>
    </ligand>
</feature>